<dbReference type="EMBL" id="AB025000">
    <property type="protein sequence ID" value="BAA76428.1"/>
    <property type="molecule type" value="mRNA"/>
</dbReference>
<dbReference type="RefSeq" id="NP_001265921.1">
    <property type="nucleotide sequence ID" value="NM_001278992.1"/>
</dbReference>
<dbReference type="SMR" id="Q9SXU1"/>
<dbReference type="STRING" id="3827.Q9SXU1"/>
<dbReference type="PaxDb" id="3827-XP_004509377.1"/>
<dbReference type="GeneID" id="101498666"/>
<dbReference type="KEGG" id="cam:101498666"/>
<dbReference type="eggNOG" id="KOG0183">
    <property type="taxonomic scope" value="Eukaryota"/>
</dbReference>
<dbReference type="OrthoDB" id="431557at2759"/>
<dbReference type="Proteomes" id="UP000087171">
    <property type="component" value="Chromosome Ca7"/>
</dbReference>
<dbReference type="GO" id="GO:0005737">
    <property type="term" value="C:cytoplasm"/>
    <property type="evidence" value="ECO:0007669"/>
    <property type="project" value="UniProtKB-SubCell"/>
</dbReference>
<dbReference type="GO" id="GO:0005634">
    <property type="term" value="C:nucleus"/>
    <property type="evidence" value="ECO:0007669"/>
    <property type="project" value="UniProtKB-SubCell"/>
</dbReference>
<dbReference type="GO" id="GO:0019773">
    <property type="term" value="C:proteasome core complex, alpha-subunit complex"/>
    <property type="evidence" value="ECO:0000250"/>
    <property type="project" value="UniProtKB"/>
</dbReference>
<dbReference type="GO" id="GO:0006511">
    <property type="term" value="P:ubiquitin-dependent protein catabolic process"/>
    <property type="evidence" value="ECO:0007669"/>
    <property type="project" value="InterPro"/>
</dbReference>
<dbReference type="CDD" id="cd03755">
    <property type="entry name" value="proteasome_alpha_type_7"/>
    <property type="match status" value="1"/>
</dbReference>
<dbReference type="FunFam" id="3.60.20.10:FF:000004">
    <property type="entry name" value="Proteasome subunit alpha type-4"/>
    <property type="match status" value="1"/>
</dbReference>
<dbReference type="Gene3D" id="3.60.20.10">
    <property type="entry name" value="Glutamine Phosphoribosylpyrophosphate, subunit 1, domain 1"/>
    <property type="match status" value="1"/>
</dbReference>
<dbReference type="InterPro" id="IPR029055">
    <property type="entry name" value="Ntn_hydrolases_N"/>
</dbReference>
<dbReference type="InterPro" id="IPR050115">
    <property type="entry name" value="Proteasome_alpha"/>
</dbReference>
<dbReference type="InterPro" id="IPR023332">
    <property type="entry name" value="Proteasome_alpha-type"/>
</dbReference>
<dbReference type="InterPro" id="IPR000426">
    <property type="entry name" value="Proteasome_asu_N"/>
</dbReference>
<dbReference type="InterPro" id="IPR001353">
    <property type="entry name" value="Proteasome_sua/b"/>
</dbReference>
<dbReference type="NCBIfam" id="NF003075">
    <property type="entry name" value="PRK03996.1"/>
    <property type="match status" value="1"/>
</dbReference>
<dbReference type="PANTHER" id="PTHR11599">
    <property type="entry name" value="PROTEASOME SUBUNIT ALPHA/BETA"/>
    <property type="match status" value="1"/>
</dbReference>
<dbReference type="Pfam" id="PF00227">
    <property type="entry name" value="Proteasome"/>
    <property type="match status" value="1"/>
</dbReference>
<dbReference type="Pfam" id="PF10584">
    <property type="entry name" value="Proteasome_A_N"/>
    <property type="match status" value="1"/>
</dbReference>
<dbReference type="SMART" id="SM00948">
    <property type="entry name" value="Proteasome_A_N"/>
    <property type="match status" value="1"/>
</dbReference>
<dbReference type="SUPFAM" id="SSF56235">
    <property type="entry name" value="N-terminal nucleophile aminohydrolases (Ntn hydrolases)"/>
    <property type="match status" value="1"/>
</dbReference>
<dbReference type="PROSITE" id="PS00388">
    <property type="entry name" value="PROTEASOME_ALPHA_1"/>
    <property type="match status" value="1"/>
</dbReference>
<dbReference type="PROSITE" id="PS51475">
    <property type="entry name" value="PROTEASOME_ALPHA_2"/>
    <property type="match status" value="1"/>
</dbReference>
<organism>
    <name type="scientific">Cicer arietinum</name>
    <name type="common">Chickpea</name>
    <name type="synonym">Garbanzo</name>
    <dbReference type="NCBI Taxonomy" id="3827"/>
    <lineage>
        <taxon>Eukaryota</taxon>
        <taxon>Viridiplantae</taxon>
        <taxon>Streptophyta</taxon>
        <taxon>Embryophyta</taxon>
        <taxon>Tracheophyta</taxon>
        <taxon>Spermatophyta</taxon>
        <taxon>Magnoliopsida</taxon>
        <taxon>eudicotyledons</taxon>
        <taxon>Gunneridae</taxon>
        <taxon>Pentapetalae</taxon>
        <taxon>rosids</taxon>
        <taxon>fabids</taxon>
        <taxon>Fabales</taxon>
        <taxon>Fabaceae</taxon>
        <taxon>Papilionoideae</taxon>
        <taxon>50 kb inversion clade</taxon>
        <taxon>NPAAA clade</taxon>
        <taxon>Hologalegina</taxon>
        <taxon>IRL clade</taxon>
        <taxon>Cicereae</taxon>
        <taxon>Cicer</taxon>
    </lineage>
</organism>
<protein>
    <recommendedName>
        <fullName>Proteasome subunit alpha type-7</fullName>
    </recommendedName>
    <alternativeName>
        <fullName>20S proteasome alpha subunit D</fullName>
    </alternativeName>
    <alternativeName>
        <fullName>20S proteasome subunit alpha-4</fullName>
    </alternativeName>
</protein>
<gene>
    <name type="primary">PAD1</name>
</gene>
<name>PSA7_CICAR</name>
<keyword id="KW-0963">Cytoplasm</keyword>
<keyword id="KW-0539">Nucleus</keyword>
<keyword id="KW-0647">Proteasome</keyword>
<keyword id="KW-1185">Reference proteome</keyword>
<evidence type="ECO:0000250" key="1"/>
<evidence type="ECO:0000255" key="2">
    <source>
        <dbReference type="PROSITE-ProRule" id="PRU00808"/>
    </source>
</evidence>
<accession>Q9SXU1</accession>
<feature type="chain" id="PRO_0000124161" description="Proteasome subunit alpha type-7">
    <location>
        <begin position="1"/>
        <end position="249"/>
    </location>
</feature>
<sequence>MARYDRAITVFSPDGHLFQVEYALEAVRKGNAAVGVRGTDNVVLGVEKKSTAKLQDTRSVRKIVNLDDHIALACAGLKADARVLINRARVECQSHRLTVEDPVTVEYITRYIAGLQQKYTQSGGVRPFGLSTLIVGFDPYTGSPSLYQTDPSGTFSAWKANATGRNSNSIREFLEKNFKETSGQETVKLAIRALLEVVESGGKNIEVAVMTKENGLRQLEEAEIDAIVAEIEAEKAAAEAAKKAPPKDT</sequence>
<reference key="1">
    <citation type="journal article" date="2000" name="Z. Naturforsch. C">
        <title>Genes expressed in Ascochyta rabiei-inoculated chickpea plants and elicited cell cultures as detected by differential cDNA-hybridization.</title>
        <authorList>
            <person name="Ichinose Y."/>
            <person name="Tiemann K."/>
            <person name="Schwenger-Erger C."/>
            <person name="Toyoda K."/>
            <person name="Hein F."/>
            <person name="Hanselle T."/>
            <person name="Cornels H."/>
            <person name="Barz W."/>
        </authorList>
    </citation>
    <scope>NUCLEOTIDE SEQUENCE [MRNA]</scope>
    <source>
        <strain>ILC3279</strain>
        <tissue>Leaf</tissue>
    </source>
</reference>
<comment type="function">
    <text>The proteasome is a multicatalytic proteinase complex which is characterized by its ability to cleave peptides with Arg, Phe, Tyr, Leu, and Glu adjacent to the leaving group at neutral or slightly basic pH. The proteasome has an ATP-dependent proteolytic activity.</text>
</comment>
<comment type="subunit">
    <text evidence="1">The 26S proteasome consists of a 20S proteasome core and two 19S regulatory subunits. The 20S proteasome core is composed of 28 subunits that are arranged in four stacked rings, resulting in a barrel-shaped structure. The two end rings are each formed by seven alpha subunits, and the two central rings are each formed by seven beta subunits. The catalytic chamber with the active sites is on the inside of the barrel (By similarity).</text>
</comment>
<comment type="subcellular location">
    <subcellularLocation>
        <location evidence="1">Cytoplasm</location>
    </subcellularLocation>
    <subcellularLocation>
        <location evidence="1">Nucleus</location>
    </subcellularLocation>
</comment>
<comment type="similarity">
    <text evidence="2">Belongs to the peptidase T1A family.</text>
</comment>
<proteinExistence type="evidence at transcript level"/>